<protein>
    <recommendedName>
        <fullName evidence="1">Aspartate carbamoyltransferase regulatory chain</fullName>
    </recommendedName>
</protein>
<comment type="function">
    <text evidence="1">Involved in allosteric regulation of aspartate carbamoyltransferase.</text>
</comment>
<comment type="cofactor">
    <cofactor evidence="1">
        <name>Zn(2+)</name>
        <dbReference type="ChEBI" id="CHEBI:29105"/>
    </cofactor>
    <text evidence="1">Binds 1 zinc ion per subunit.</text>
</comment>
<comment type="subunit">
    <text evidence="1">Contains catalytic and regulatory chains.</text>
</comment>
<comment type="similarity">
    <text evidence="1">Belongs to the PyrI family.</text>
</comment>
<reference key="1">
    <citation type="journal article" date="2009" name="PLoS Genet.">
        <title>Organised genome dynamics in the Escherichia coli species results in highly diverse adaptive paths.</title>
        <authorList>
            <person name="Touchon M."/>
            <person name="Hoede C."/>
            <person name="Tenaillon O."/>
            <person name="Barbe V."/>
            <person name="Baeriswyl S."/>
            <person name="Bidet P."/>
            <person name="Bingen E."/>
            <person name="Bonacorsi S."/>
            <person name="Bouchier C."/>
            <person name="Bouvet O."/>
            <person name="Calteau A."/>
            <person name="Chiapello H."/>
            <person name="Clermont O."/>
            <person name="Cruveiller S."/>
            <person name="Danchin A."/>
            <person name="Diard M."/>
            <person name="Dossat C."/>
            <person name="Karoui M.E."/>
            <person name="Frapy E."/>
            <person name="Garry L."/>
            <person name="Ghigo J.M."/>
            <person name="Gilles A.M."/>
            <person name="Johnson J."/>
            <person name="Le Bouguenec C."/>
            <person name="Lescat M."/>
            <person name="Mangenot S."/>
            <person name="Martinez-Jehanne V."/>
            <person name="Matic I."/>
            <person name="Nassif X."/>
            <person name="Oztas S."/>
            <person name="Petit M.A."/>
            <person name="Pichon C."/>
            <person name="Rouy Z."/>
            <person name="Ruf C.S."/>
            <person name="Schneider D."/>
            <person name="Tourret J."/>
            <person name="Vacherie B."/>
            <person name="Vallenet D."/>
            <person name="Medigue C."/>
            <person name="Rocha E.P.C."/>
            <person name="Denamur E."/>
        </authorList>
    </citation>
    <scope>NUCLEOTIDE SEQUENCE [LARGE SCALE GENOMIC DNA]</scope>
    <source>
        <strain>ATCC 35469 / DSM 13698 / BCRC 15582 / CCUG 18766 / IAM 14443 / JCM 21226 / LMG 7866 / NBRC 102419 / NCTC 12128 / CDC 0568-73</strain>
    </source>
</reference>
<gene>
    <name evidence="1" type="primary">pyrI</name>
    <name type="ordered locus">EFER_4326</name>
</gene>
<organism>
    <name type="scientific">Escherichia fergusonii (strain ATCC 35469 / DSM 13698 / CCUG 18766 / IAM 14443 / JCM 21226 / LMG 7866 / NBRC 102419 / NCTC 12128 / CDC 0568-73)</name>
    <dbReference type="NCBI Taxonomy" id="585054"/>
    <lineage>
        <taxon>Bacteria</taxon>
        <taxon>Pseudomonadati</taxon>
        <taxon>Pseudomonadota</taxon>
        <taxon>Gammaproteobacteria</taxon>
        <taxon>Enterobacterales</taxon>
        <taxon>Enterobacteriaceae</taxon>
        <taxon>Escherichia</taxon>
    </lineage>
</organism>
<evidence type="ECO:0000255" key="1">
    <source>
        <dbReference type="HAMAP-Rule" id="MF_00002"/>
    </source>
</evidence>
<name>PYRI_ESCF3</name>
<proteinExistence type="inferred from homology"/>
<dbReference type="EMBL" id="CU928158">
    <property type="protein sequence ID" value="CAQ91745.1"/>
    <property type="molecule type" value="Genomic_DNA"/>
</dbReference>
<dbReference type="RefSeq" id="WP_000148581.1">
    <property type="nucleotide sequence ID" value="NC_011740.1"/>
</dbReference>
<dbReference type="SMR" id="B7LMR7"/>
<dbReference type="GeneID" id="93777580"/>
<dbReference type="KEGG" id="efe:EFER_4326"/>
<dbReference type="HOGENOM" id="CLU_128576_0_0_6"/>
<dbReference type="OrthoDB" id="5599321at2"/>
<dbReference type="Proteomes" id="UP000000745">
    <property type="component" value="Chromosome"/>
</dbReference>
<dbReference type="GO" id="GO:0009347">
    <property type="term" value="C:aspartate carbamoyltransferase complex"/>
    <property type="evidence" value="ECO:0007669"/>
    <property type="project" value="InterPro"/>
</dbReference>
<dbReference type="GO" id="GO:0046872">
    <property type="term" value="F:metal ion binding"/>
    <property type="evidence" value="ECO:0007669"/>
    <property type="project" value="UniProtKB-KW"/>
</dbReference>
<dbReference type="GO" id="GO:0006207">
    <property type="term" value="P:'de novo' pyrimidine nucleobase biosynthetic process"/>
    <property type="evidence" value="ECO:0007669"/>
    <property type="project" value="InterPro"/>
</dbReference>
<dbReference type="GO" id="GO:0006221">
    <property type="term" value="P:pyrimidine nucleotide biosynthetic process"/>
    <property type="evidence" value="ECO:0007669"/>
    <property type="project" value="UniProtKB-UniRule"/>
</dbReference>
<dbReference type="FunFam" id="2.30.30.20:FF:000001">
    <property type="entry name" value="Aspartate carbamoyltransferase regulatory chain"/>
    <property type="match status" value="1"/>
</dbReference>
<dbReference type="FunFam" id="3.30.70.140:FF:000001">
    <property type="entry name" value="Aspartate carbamoyltransferase regulatory chain"/>
    <property type="match status" value="1"/>
</dbReference>
<dbReference type="Gene3D" id="2.30.30.20">
    <property type="entry name" value="Aspartate carbamoyltransferase regulatory subunit, C-terminal domain"/>
    <property type="match status" value="1"/>
</dbReference>
<dbReference type="Gene3D" id="3.30.70.140">
    <property type="entry name" value="Aspartate carbamoyltransferase regulatory subunit, N-terminal domain"/>
    <property type="match status" value="1"/>
</dbReference>
<dbReference type="HAMAP" id="MF_00002">
    <property type="entry name" value="Asp_carb_tr_reg"/>
    <property type="match status" value="1"/>
</dbReference>
<dbReference type="InterPro" id="IPR020545">
    <property type="entry name" value="Asp_carbamoyltransf_reg_N"/>
</dbReference>
<dbReference type="InterPro" id="IPR002801">
    <property type="entry name" value="Asp_carbamoylTrfase_reg"/>
</dbReference>
<dbReference type="InterPro" id="IPR020542">
    <property type="entry name" value="Asp_carbamoyltrfase_reg_C"/>
</dbReference>
<dbReference type="InterPro" id="IPR036792">
    <property type="entry name" value="Asp_carbatrfase_reg_C_sf"/>
</dbReference>
<dbReference type="InterPro" id="IPR036793">
    <property type="entry name" value="Asp_carbatrfase_reg_N_sf"/>
</dbReference>
<dbReference type="NCBIfam" id="TIGR00240">
    <property type="entry name" value="ATCase_reg"/>
    <property type="match status" value="1"/>
</dbReference>
<dbReference type="PANTHER" id="PTHR35805">
    <property type="entry name" value="ASPARTATE CARBAMOYLTRANSFERASE REGULATORY CHAIN"/>
    <property type="match status" value="1"/>
</dbReference>
<dbReference type="PANTHER" id="PTHR35805:SF1">
    <property type="entry name" value="ASPARTATE CARBAMOYLTRANSFERASE REGULATORY CHAIN"/>
    <property type="match status" value="1"/>
</dbReference>
<dbReference type="Pfam" id="PF01948">
    <property type="entry name" value="PyrI"/>
    <property type="match status" value="1"/>
</dbReference>
<dbReference type="Pfam" id="PF02748">
    <property type="entry name" value="PyrI_C"/>
    <property type="match status" value="1"/>
</dbReference>
<dbReference type="SUPFAM" id="SSF57825">
    <property type="entry name" value="Aspartate carbamoyltransferase, Regulatory-chain, C-terminal domain"/>
    <property type="match status" value="1"/>
</dbReference>
<dbReference type="SUPFAM" id="SSF54893">
    <property type="entry name" value="Aspartate carbamoyltransferase, Regulatory-chain, N-terminal domain"/>
    <property type="match status" value="1"/>
</dbReference>
<feature type="chain" id="PRO_1000193114" description="Aspartate carbamoyltransferase regulatory chain">
    <location>
        <begin position="1"/>
        <end position="153"/>
    </location>
</feature>
<feature type="binding site" evidence="1">
    <location>
        <position position="109"/>
    </location>
    <ligand>
        <name>Zn(2+)</name>
        <dbReference type="ChEBI" id="CHEBI:29105"/>
    </ligand>
</feature>
<feature type="binding site" evidence="1">
    <location>
        <position position="114"/>
    </location>
    <ligand>
        <name>Zn(2+)</name>
        <dbReference type="ChEBI" id="CHEBI:29105"/>
    </ligand>
</feature>
<feature type="binding site" evidence="1">
    <location>
        <position position="138"/>
    </location>
    <ligand>
        <name>Zn(2+)</name>
        <dbReference type="ChEBI" id="CHEBI:29105"/>
    </ligand>
</feature>
<feature type="binding site" evidence="1">
    <location>
        <position position="141"/>
    </location>
    <ligand>
        <name>Zn(2+)</name>
        <dbReference type="ChEBI" id="CHEBI:29105"/>
    </ligand>
</feature>
<keyword id="KW-0479">Metal-binding</keyword>
<keyword id="KW-0665">Pyrimidine biosynthesis</keyword>
<keyword id="KW-0862">Zinc</keyword>
<accession>B7LMR7</accession>
<sequence length="153" mass="17121">MTHDNKLQVEAIKRGTVIDHIPAQIGFKLLSLFKLTETDQRITIGLNLPSGEMGRKDLIKIENTFLSEDQVDQLALYAPQATVNRIDNYEVVGKSRPSLPERIDNVLVCPNSNCISHAEPVSSSFAVRKRANDIALKCKYCEKEFSHNVVLAN</sequence>